<organismHost>
    <name type="scientific">Homo sapiens</name>
    <name type="common">Human</name>
    <dbReference type="NCBI Taxonomy" id="9606"/>
</organismHost>
<accession>P20564</accession>
<protein>
    <recommendedName>
        <fullName>Uncharacterized 8.8 kDa protein</fullName>
    </recommendedName>
</protein>
<sequence length="74" mass="8807">MYNIKKHYSISNLGFQKFFIRKPIIIYIDLLIVGINRLMLKLSSSPRLEIQYLHSFCCFETLSIHVNTNPGRRY</sequence>
<name>YVFF_VACCC</name>
<gene>
    <name type="ORF">F ORF F</name>
</gene>
<dbReference type="EMBL" id="M35027">
    <property type="protein sequence ID" value="AAA48033.1"/>
    <property type="molecule type" value="Genomic_DNA"/>
</dbReference>
<dbReference type="PIR" id="E42506">
    <property type="entry name" value="E42506"/>
</dbReference>
<dbReference type="Proteomes" id="UP000008269">
    <property type="component" value="Segment"/>
</dbReference>
<organism>
    <name type="scientific">Vaccinia virus (strain Copenhagen)</name>
    <name type="common">VACV</name>
    <dbReference type="NCBI Taxonomy" id="10249"/>
    <lineage>
        <taxon>Viruses</taxon>
        <taxon>Varidnaviria</taxon>
        <taxon>Bamfordvirae</taxon>
        <taxon>Nucleocytoviricota</taxon>
        <taxon>Pokkesviricetes</taxon>
        <taxon>Chitovirales</taxon>
        <taxon>Poxviridae</taxon>
        <taxon>Chordopoxvirinae</taxon>
        <taxon>Orthopoxvirus</taxon>
        <taxon>Vaccinia virus</taxon>
    </lineage>
</organism>
<proteinExistence type="predicted"/>
<keyword id="KW-1185">Reference proteome</keyword>
<reference key="1">
    <citation type="journal article" date="1990" name="Virology">
        <title>The complete DNA sequence of vaccinia virus.</title>
        <authorList>
            <person name="Goebel S.J."/>
            <person name="Johnson G.P."/>
            <person name="Perkus M.E."/>
            <person name="Davis S.W."/>
            <person name="Winslow J.P."/>
            <person name="Paoletti E."/>
        </authorList>
    </citation>
    <scope>NUCLEOTIDE SEQUENCE [LARGE SCALE GENOMIC DNA]</scope>
</reference>
<reference key="2">
    <citation type="journal article" date="1990" name="Virology">
        <title>Appendix to 'The complete DNA sequence of vaccinia virus'.</title>
        <authorList>
            <person name="Goebel S.J."/>
            <person name="Johnson G.P."/>
            <person name="Perkus M.E."/>
            <person name="Davis S.W."/>
            <person name="Winslow J.P."/>
            <person name="Paoletti E."/>
        </authorList>
    </citation>
    <scope>COMPLETE GENOME</scope>
</reference>
<feature type="chain" id="PRO_0000099716" description="Uncharacterized 8.8 kDa protein">
    <location>
        <begin position="1"/>
        <end position="74"/>
    </location>
</feature>